<gene>
    <name type="primary">ygfM</name>
    <name type="ordered locus">Z4219</name>
    <name type="ordered locus">ECs3753</name>
</gene>
<feature type="chain" id="PRO_0000169357" description="Uncharacterized protein YgfM">
    <location>
        <begin position="1"/>
        <end position="259"/>
    </location>
</feature>
<feature type="domain" description="FAD-binding PCMH-type" evidence="1">
    <location>
        <begin position="1"/>
        <end position="159"/>
    </location>
</feature>
<dbReference type="EMBL" id="AE005174">
    <property type="protein sequence ID" value="AAG58009.1"/>
    <property type="molecule type" value="Genomic_DNA"/>
</dbReference>
<dbReference type="EMBL" id="BA000007">
    <property type="protein sequence ID" value="BAB37176.1"/>
    <property type="molecule type" value="Genomic_DNA"/>
</dbReference>
<dbReference type="PIR" id="A98098">
    <property type="entry name" value="A98098"/>
</dbReference>
<dbReference type="PIR" id="E85943">
    <property type="entry name" value="E85943"/>
</dbReference>
<dbReference type="RefSeq" id="NP_311780.1">
    <property type="nucleotide sequence ID" value="NC_002695.1"/>
</dbReference>
<dbReference type="RefSeq" id="WP_000572462.1">
    <property type="nucleotide sequence ID" value="NZ_VOAI01000003.1"/>
</dbReference>
<dbReference type="SMR" id="P64558"/>
<dbReference type="STRING" id="155864.Z4219"/>
<dbReference type="GeneID" id="916427"/>
<dbReference type="KEGG" id="ece:Z4219"/>
<dbReference type="KEGG" id="ecs:ECs_3753"/>
<dbReference type="PATRIC" id="fig|386585.9.peg.3915"/>
<dbReference type="eggNOG" id="COG1319">
    <property type="taxonomic scope" value="Bacteria"/>
</dbReference>
<dbReference type="HOGENOM" id="CLU_1053145_0_0_6"/>
<dbReference type="OMA" id="GGCAFLK"/>
<dbReference type="Proteomes" id="UP000000558">
    <property type="component" value="Chromosome"/>
</dbReference>
<dbReference type="Proteomes" id="UP000002519">
    <property type="component" value="Chromosome"/>
</dbReference>
<dbReference type="GO" id="GO:0071949">
    <property type="term" value="F:FAD binding"/>
    <property type="evidence" value="ECO:0007669"/>
    <property type="project" value="InterPro"/>
</dbReference>
<dbReference type="GO" id="GO:0016491">
    <property type="term" value="F:oxidoreductase activity"/>
    <property type="evidence" value="ECO:0007669"/>
    <property type="project" value="InterPro"/>
</dbReference>
<dbReference type="Gene3D" id="3.30.465.10">
    <property type="match status" value="1"/>
</dbReference>
<dbReference type="Gene3D" id="3.30.390.50">
    <property type="entry name" value="CO dehydrogenase flavoprotein, C-terminal domain"/>
    <property type="match status" value="1"/>
</dbReference>
<dbReference type="InterPro" id="IPR005107">
    <property type="entry name" value="CO_DH_flav_C"/>
</dbReference>
<dbReference type="InterPro" id="IPR036683">
    <property type="entry name" value="CO_DH_flav_C_dom_sf"/>
</dbReference>
<dbReference type="InterPro" id="IPR051312">
    <property type="entry name" value="Diverse_Substr_Oxidored"/>
</dbReference>
<dbReference type="InterPro" id="IPR016166">
    <property type="entry name" value="FAD-bd_PCMH"/>
</dbReference>
<dbReference type="InterPro" id="IPR036318">
    <property type="entry name" value="FAD-bd_PCMH-like_sf"/>
</dbReference>
<dbReference type="InterPro" id="IPR016169">
    <property type="entry name" value="FAD-bd_PCMH_sub2"/>
</dbReference>
<dbReference type="InterPro" id="IPR017698">
    <property type="entry name" value="Molybdo-cont_Rdtase_FAD-bd_su"/>
</dbReference>
<dbReference type="InterPro" id="IPR002346">
    <property type="entry name" value="Mopterin_DH_FAD-bd"/>
</dbReference>
<dbReference type="NCBIfam" id="TIGR03312">
    <property type="entry name" value="Se_sel_red_FAD"/>
    <property type="match status" value="1"/>
</dbReference>
<dbReference type="PANTHER" id="PTHR42659:SF9">
    <property type="entry name" value="XANTHINE DEHYDROGENASE FAD-BINDING SUBUNIT XDHB-RELATED"/>
    <property type="match status" value="1"/>
</dbReference>
<dbReference type="PANTHER" id="PTHR42659">
    <property type="entry name" value="XANTHINE DEHYDROGENASE SUBUNIT C-RELATED"/>
    <property type="match status" value="1"/>
</dbReference>
<dbReference type="Pfam" id="PF00941">
    <property type="entry name" value="FAD_binding_5"/>
    <property type="match status" value="1"/>
</dbReference>
<dbReference type="SMART" id="SM01092">
    <property type="entry name" value="CO_deh_flav_C"/>
    <property type="match status" value="1"/>
</dbReference>
<dbReference type="SUPFAM" id="SSF55447">
    <property type="entry name" value="CO dehydrogenase flavoprotein C-terminal domain-like"/>
    <property type="match status" value="1"/>
</dbReference>
<dbReference type="SUPFAM" id="SSF56176">
    <property type="entry name" value="FAD-binding/transporter-associated domain-like"/>
    <property type="match status" value="1"/>
</dbReference>
<dbReference type="PROSITE" id="PS51387">
    <property type="entry name" value="FAD_PCMH"/>
    <property type="match status" value="1"/>
</dbReference>
<sequence>MIEQFFRPDSVEQALELKRRYQDEAVWFAGGSKLNATPTRTDKKIAISLQDLELDWVDWDNGALRIGAMSRLQPLRDARFIPAALREALGFVYSRHVRNQSTIGGEIAARQEESVLLPVLLALDAELVFGNGETLSIEDYLACPCDRLLTEIIIKDPYRTCATRKISRSQAGLTVVTAAVAMTDHDGMRIALDGVASKALRLHDVEKQNLEGNALEQAVANAIFPQEDLRGSVAYKRYITGVLVADLYADCQQAGEEAV</sequence>
<reference key="1">
    <citation type="journal article" date="2001" name="Nature">
        <title>Genome sequence of enterohaemorrhagic Escherichia coli O157:H7.</title>
        <authorList>
            <person name="Perna N.T."/>
            <person name="Plunkett G. III"/>
            <person name="Burland V."/>
            <person name="Mau B."/>
            <person name="Glasner J.D."/>
            <person name="Rose D.J."/>
            <person name="Mayhew G.F."/>
            <person name="Evans P.S."/>
            <person name="Gregor J."/>
            <person name="Kirkpatrick H.A."/>
            <person name="Posfai G."/>
            <person name="Hackett J."/>
            <person name="Klink S."/>
            <person name="Boutin A."/>
            <person name="Shao Y."/>
            <person name="Miller L."/>
            <person name="Grotbeck E.J."/>
            <person name="Davis N.W."/>
            <person name="Lim A."/>
            <person name="Dimalanta E.T."/>
            <person name="Potamousis K."/>
            <person name="Apodaca J."/>
            <person name="Anantharaman T.S."/>
            <person name="Lin J."/>
            <person name="Yen G."/>
            <person name="Schwartz D.C."/>
            <person name="Welch R.A."/>
            <person name="Blattner F.R."/>
        </authorList>
    </citation>
    <scope>NUCLEOTIDE SEQUENCE [LARGE SCALE GENOMIC DNA]</scope>
    <source>
        <strain>O157:H7 / EDL933 / ATCC 700927 / EHEC</strain>
    </source>
</reference>
<reference key="2">
    <citation type="journal article" date="2001" name="DNA Res.">
        <title>Complete genome sequence of enterohemorrhagic Escherichia coli O157:H7 and genomic comparison with a laboratory strain K-12.</title>
        <authorList>
            <person name="Hayashi T."/>
            <person name="Makino K."/>
            <person name="Ohnishi M."/>
            <person name="Kurokawa K."/>
            <person name="Ishii K."/>
            <person name="Yokoyama K."/>
            <person name="Han C.-G."/>
            <person name="Ohtsubo E."/>
            <person name="Nakayama K."/>
            <person name="Murata T."/>
            <person name="Tanaka M."/>
            <person name="Tobe T."/>
            <person name="Iida T."/>
            <person name="Takami H."/>
            <person name="Honda T."/>
            <person name="Sasakawa C."/>
            <person name="Ogasawara N."/>
            <person name="Yasunaga T."/>
            <person name="Kuhara S."/>
            <person name="Shiba T."/>
            <person name="Hattori M."/>
            <person name="Shinagawa H."/>
        </authorList>
    </citation>
    <scope>NUCLEOTIDE SEQUENCE [LARGE SCALE GENOMIC DNA]</scope>
    <source>
        <strain>O157:H7 / Sakai / RIMD 0509952 / EHEC</strain>
    </source>
</reference>
<keyword id="KW-1185">Reference proteome</keyword>
<proteinExistence type="predicted"/>
<evidence type="ECO:0000255" key="1">
    <source>
        <dbReference type="PROSITE-ProRule" id="PRU00718"/>
    </source>
</evidence>
<name>YGFM_ECO57</name>
<accession>P64558</accession>
<accession>Q46813</accession>
<organism>
    <name type="scientific">Escherichia coli O157:H7</name>
    <dbReference type="NCBI Taxonomy" id="83334"/>
    <lineage>
        <taxon>Bacteria</taxon>
        <taxon>Pseudomonadati</taxon>
        <taxon>Pseudomonadota</taxon>
        <taxon>Gammaproteobacteria</taxon>
        <taxon>Enterobacterales</taxon>
        <taxon>Enterobacteriaceae</taxon>
        <taxon>Escherichia</taxon>
    </lineage>
</organism>
<protein>
    <recommendedName>
        <fullName>Uncharacterized protein YgfM</fullName>
    </recommendedName>
</protein>